<accession>B2SUV8</accession>
<feature type="chain" id="PRO_1000122118" description="tRNA modification GTPase MnmE">
    <location>
        <begin position="1"/>
        <end position="446"/>
    </location>
</feature>
<feature type="domain" description="TrmE-type G">
    <location>
        <begin position="216"/>
        <end position="368"/>
    </location>
</feature>
<feature type="binding site" evidence="1">
    <location>
        <position position="24"/>
    </location>
    <ligand>
        <name>(6S)-5-formyl-5,6,7,8-tetrahydrofolate</name>
        <dbReference type="ChEBI" id="CHEBI:57457"/>
    </ligand>
</feature>
<feature type="binding site" evidence="1">
    <location>
        <position position="81"/>
    </location>
    <ligand>
        <name>(6S)-5-formyl-5,6,7,8-tetrahydrofolate</name>
        <dbReference type="ChEBI" id="CHEBI:57457"/>
    </ligand>
</feature>
<feature type="binding site" evidence="1">
    <location>
        <position position="120"/>
    </location>
    <ligand>
        <name>(6S)-5-formyl-5,6,7,8-tetrahydrofolate</name>
        <dbReference type="ChEBI" id="CHEBI:57457"/>
    </ligand>
</feature>
<feature type="binding site" evidence="1">
    <location>
        <begin position="226"/>
        <end position="231"/>
    </location>
    <ligand>
        <name>GTP</name>
        <dbReference type="ChEBI" id="CHEBI:37565"/>
    </ligand>
</feature>
<feature type="binding site" evidence="1">
    <location>
        <position position="226"/>
    </location>
    <ligand>
        <name>K(+)</name>
        <dbReference type="ChEBI" id="CHEBI:29103"/>
    </ligand>
</feature>
<feature type="binding site" evidence="1">
    <location>
        <position position="230"/>
    </location>
    <ligand>
        <name>Mg(2+)</name>
        <dbReference type="ChEBI" id="CHEBI:18420"/>
    </ligand>
</feature>
<feature type="binding site" evidence="1">
    <location>
        <begin position="245"/>
        <end position="251"/>
    </location>
    <ligand>
        <name>GTP</name>
        <dbReference type="ChEBI" id="CHEBI:37565"/>
    </ligand>
</feature>
<feature type="binding site" evidence="1">
    <location>
        <position position="245"/>
    </location>
    <ligand>
        <name>K(+)</name>
        <dbReference type="ChEBI" id="CHEBI:29103"/>
    </ligand>
</feature>
<feature type="binding site" evidence="1">
    <location>
        <position position="247"/>
    </location>
    <ligand>
        <name>K(+)</name>
        <dbReference type="ChEBI" id="CHEBI:29103"/>
    </ligand>
</feature>
<feature type="binding site" evidence="1">
    <location>
        <position position="250"/>
    </location>
    <ligand>
        <name>K(+)</name>
        <dbReference type="ChEBI" id="CHEBI:29103"/>
    </ligand>
</feature>
<feature type="binding site" evidence="1">
    <location>
        <position position="251"/>
    </location>
    <ligand>
        <name>Mg(2+)</name>
        <dbReference type="ChEBI" id="CHEBI:18420"/>
    </ligand>
</feature>
<feature type="binding site" evidence="1">
    <location>
        <begin position="270"/>
        <end position="273"/>
    </location>
    <ligand>
        <name>GTP</name>
        <dbReference type="ChEBI" id="CHEBI:37565"/>
    </ligand>
</feature>
<feature type="binding site" evidence="1">
    <location>
        <position position="446"/>
    </location>
    <ligand>
        <name>(6S)-5-formyl-5,6,7,8-tetrahydrofolate</name>
        <dbReference type="ChEBI" id="CHEBI:57457"/>
    </ligand>
</feature>
<name>MNME_XANOP</name>
<proteinExistence type="inferred from homology"/>
<organism>
    <name type="scientific">Xanthomonas oryzae pv. oryzae (strain PXO99A)</name>
    <dbReference type="NCBI Taxonomy" id="360094"/>
    <lineage>
        <taxon>Bacteria</taxon>
        <taxon>Pseudomonadati</taxon>
        <taxon>Pseudomonadota</taxon>
        <taxon>Gammaproteobacteria</taxon>
        <taxon>Lysobacterales</taxon>
        <taxon>Lysobacteraceae</taxon>
        <taxon>Xanthomonas</taxon>
    </lineage>
</organism>
<dbReference type="EC" id="3.6.-.-" evidence="1"/>
<dbReference type="EMBL" id="CP000967">
    <property type="protein sequence ID" value="ACD61651.1"/>
    <property type="molecule type" value="Genomic_DNA"/>
</dbReference>
<dbReference type="RefSeq" id="WP_012446487.1">
    <property type="nucleotide sequence ID" value="NC_010717.2"/>
</dbReference>
<dbReference type="SMR" id="B2SUV8"/>
<dbReference type="KEGG" id="xop:PXO_03489"/>
<dbReference type="eggNOG" id="COG0486">
    <property type="taxonomic scope" value="Bacteria"/>
</dbReference>
<dbReference type="HOGENOM" id="CLU_019624_4_1_6"/>
<dbReference type="Proteomes" id="UP000001740">
    <property type="component" value="Chromosome"/>
</dbReference>
<dbReference type="GO" id="GO:0005829">
    <property type="term" value="C:cytosol"/>
    <property type="evidence" value="ECO:0007669"/>
    <property type="project" value="TreeGrafter"/>
</dbReference>
<dbReference type="GO" id="GO:0005525">
    <property type="term" value="F:GTP binding"/>
    <property type="evidence" value="ECO:0007669"/>
    <property type="project" value="UniProtKB-UniRule"/>
</dbReference>
<dbReference type="GO" id="GO:0003924">
    <property type="term" value="F:GTPase activity"/>
    <property type="evidence" value="ECO:0007669"/>
    <property type="project" value="UniProtKB-UniRule"/>
</dbReference>
<dbReference type="GO" id="GO:0046872">
    <property type="term" value="F:metal ion binding"/>
    <property type="evidence" value="ECO:0007669"/>
    <property type="project" value="UniProtKB-KW"/>
</dbReference>
<dbReference type="GO" id="GO:0030488">
    <property type="term" value="P:tRNA methylation"/>
    <property type="evidence" value="ECO:0007669"/>
    <property type="project" value="TreeGrafter"/>
</dbReference>
<dbReference type="GO" id="GO:0002098">
    <property type="term" value="P:tRNA wobble uridine modification"/>
    <property type="evidence" value="ECO:0007669"/>
    <property type="project" value="TreeGrafter"/>
</dbReference>
<dbReference type="CDD" id="cd04164">
    <property type="entry name" value="trmE"/>
    <property type="match status" value="1"/>
</dbReference>
<dbReference type="CDD" id="cd14858">
    <property type="entry name" value="TrmE_N"/>
    <property type="match status" value="1"/>
</dbReference>
<dbReference type="FunFam" id="3.40.50.300:FF:001376">
    <property type="entry name" value="tRNA modification GTPase MnmE"/>
    <property type="match status" value="1"/>
</dbReference>
<dbReference type="Gene3D" id="3.40.50.300">
    <property type="entry name" value="P-loop containing nucleotide triphosphate hydrolases"/>
    <property type="match status" value="1"/>
</dbReference>
<dbReference type="Gene3D" id="3.30.1360.120">
    <property type="entry name" value="Probable tRNA modification gtpase trme, domain 1"/>
    <property type="match status" value="1"/>
</dbReference>
<dbReference type="Gene3D" id="1.20.120.430">
    <property type="entry name" value="tRNA modification GTPase MnmE domain 2"/>
    <property type="match status" value="1"/>
</dbReference>
<dbReference type="HAMAP" id="MF_00379">
    <property type="entry name" value="GTPase_MnmE"/>
    <property type="match status" value="1"/>
</dbReference>
<dbReference type="InterPro" id="IPR031168">
    <property type="entry name" value="G_TrmE"/>
</dbReference>
<dbReference type="InterPro" id="IPR006073">
    <property type="entry name" value="GTP-bd"/>
</dbReference>
<dbReference type="InterPro" id="IPR018948">
    <property type="entry name" value="GTP-bd_TrmE_N"/>
</dbReference>
<dbReference type="InterPro" id="IPR004520">
    <property type="entry name" value="GTPase_MnmE"/>
</dbReference>
<dbReference type="InterPro" id="IPR027368">
    <property type="entry name" value="MnmE_dom2"/>
</dbReference>
<dbReference type="InterPro" id="IPR025867">
    <property type="entry name" value="MnmE_helical"/>
</dbReference>
<dbReference type="InterPro" id="IPR027417">
    <property type="entry name" value="P-loop_NTPase"/>
</dbReference>
<dbReference type="InterPro" id="IPR005225">
    <property type="entry name" value="Small_GTP-bd"/>
</dbReference>
<dbReference type="InterPro" id="IPR027266">
    <property type="entry name" value="TrmE/GcvT_dom1"/>
</dbReference>
<dbReference type="NCBIfam" id="TIGR00450">
    <property type="entry name" value="mnmE_trmE_thdF"/>
    <property type="match status" value="1"/>
</dbReference>
<dbReference type="NCBIfam" id="NF003661">
    <property type="entry name" value="PRK05291.1-3"/>
    <property type="match status" value="1"/>
</dbReference>
<dbReference type="NCBIfam" id="TIGR00231">
    <property type="entry name" value="small_GTP"/>
    <property type="match status" value="1"/>
</dbReference>
<dbReference type="PANTHER" id="PTHR42714">
    <property type="entry name" value="TRNA MODIFICATION GTPASE GTPBP3"/>
    <property type="match status" value="1"/>
</dbReference>
<dbReference type="PANTHER" id="PTHR42714:SF2">
    <property type="entry name" value="TRNA MODIFICATION GTPASE GTPBP3, MITOCHONDRIAL"/>
    <property type="match status" value="1"/>
</dbReference>
<dbReference type="Pfam" id="PF01926">
    <property type="entry name" value="MMR_HSR1"/>
    <property type="match status" value="1"/>
</dbReference>
<dbReference type="Pfam" id="PF12631">
    <property type="entry name" value="MnmE_helical"/>
    <property type="match status" value="1"/>
</dbReference>
<dbReference type="Pfam" id="PF10396">
    <property type="entry name" value="TrmE_N"/>
    <property type="match status" value="1"/>
</dbReference>
<dbReference type="PRINTS" id="PR00326">
    <property type="entry name" value="GTP1OBG"/>
</dbReference>
<dbReference type="SUPFAM" id="SSF52540">
    <property type="entry name" value="P-loop containing nucleoside triphosphate hydrolases"/>
    <property type="match status" value="1"/>
</dbReference>
<dbReference type="PROSITE" id="PS51709">
    <property type="entry name" value="G_TRME"/>
    <property type="match status" value="1"/>
</dbReference>
<gene>
    <name evidence="1" type="primary">mnmE</name>
    <name evidence="1" type="synonym">trmE</name>
    <name type="ordered locus">PXO_03489</name>
</gene>
<protein>
    <recommendedName>
        <fullName evidence="1">tRNA modification GTPase MnmE</fullName>
        <ecNumber evidence="1">3.6.-.-</ecNumber>
    </recommendedName>
</protein>
<sequence>MSSSTSTIVAIASAAGTGGVGIVRLSGPQSRQIAVQLGVARLQPRHAHYARFRDAQGAVIDDGIALWFNAPHSFTGEDVVELQGHGSPVLLRQLVARCIELGARQARAGEFSERAFLNGKLDLAQAEAIADVIAAGDLRAARAARRALDGVFSRRVDAVAHTLTRLRIHVEAAIDFADEPLDTLGGNQVRDGLTQARTLLAQLLRDAERGRTLRDGLHAVLIGPPNAGKSSLLNALAGSDRAIVTDVAGTTRDTLHEAIQLDGFELTLVDTAGLRDGGDAIEREGMRRARAELERADLALVVLDARDPQAARAAIGDAIDAVPRQLWIHNKCDLLSDAAPLDVNAIAVSAVTGQGLEQLHIRLRELALGDGVESVDGEFSARTRHVEALRRAERHVDAADLELGFEQLELAAEELRLAHEALGEITGKISADDLLGKIFSSFCIGK</sequence>
<keyword id="KW-0963">Cytoplasm</keyword>
<keyword id="KW-0342">GTP-binding</keyword>
<keyword id="KW-0378">Hydrolase</keyword>
<keyword id="KW-0460">Magnesium</keyword>
<keyword id="KW-0479">Metal-binding</keyword>
<keyword id="KW-0547">Nucleotide-binding</keyword>
<keyword id="KW-0630">Potassium</keyword>
<keyword id="KW-0819">tRNA processing</keyword>
<comment type="function">
    <text evidence="1">Exhibits a very high intrinsic GTPase hydrolysis rate. Involved in the addition of a carboxymethylaminomethyl (cmnm) group at the wobble position (U34) of certain tRNAs, forming tRNA-cmnm(5)s(2)U34.</text>
</comment>
<comment type="cofactor">
    <cofactor evidence="1">
        <name>K(+)</name>
        <dbReference type="ChEBI" id="CHEBI:29103"/>
    </cofactor>
    <text evidence="1">Binds 1 potassium ion per subunit.</text>
</comment>
<comment type="subunit">
    <text evidence="1">Homodimer. Heterotetramer of two MnmE and two MnmG subunits.</text>
</comment>
<comment type="subcellular location">
    <subcellularLocation>
        <location evidence="1">Cytoplasm</location>
    </subcellularLocation>
</comment>
<comment type="similarity">
    <text evidence="1">Belongs to the TRAFAC class TrmE-Era-EngA-EngB-Septin-like GTPase superfamily. TrmE GTPase family.</text>
</comment>
<evidence type="ECO:0000255" key="1">
    <source>
        <dbReference type="HAMAP-Rule" id="MF_00379"/>
    </source>
</evidence>
<reference key="1">
    <citation type="journal article" date="2008" name="BMC Genomics">
        <title>Genome sequence and rapid evolution of the rice pathogen Xanthomonas oryzae pv. oryzae PXO99A.</title>
        <authorList>
            <person name="Salzberg S.L."/>
            <person name="Sommer D.D."/>
            <person name="Schatz M.C."/>
            <person name="Phillippy A.M."/>
            <person name="Rabinowicz P.D."/>
            <person name="Tsuge S."/>
            <person name="Furutani A."/>
            <person name="Ochiai H."/>
            <person name="Delcher A.L."/>
            <person name="Kelley D."/>
            <person name="Madupu R."/>
            <person name="Puiu D."/>
            <person name="Radune D."/>
            <person name="Shumway M."/>
            <person name="Trapnell C."/>
            <person name="Aparna G."/>
            <person name="Jha G."/>
            <person name="Pandey A."/>
            <person name="Patil P.B."/>
            <person name="Ishihara H."/>
            <person name="Meyer D.F."/>
            <person name="Szurek B."/>
            <person name="Verdier V."/>
            <person name="Koebnik R."/>
            <person name="Dow J.M."/>
            <person name="Ryan R.P."/>
            <person name="Hirata H."/>
            <person name="Tsuyumu S."/>
            <person name="Won Lee S."/>
            <person name="Seo Y.-S."/>
            <person name="Sriariyanum M."/>
            <person name="Ronald P.C."/>
            <person name="Sonti R.V."/>
            <person name="Van Sluys M.-A."/>
            <person name="Leach J.E."/>
            <person name="White F.F."/>
            <person name="Bogdanove A.J."/>
        </authorList>
    </citation>
    <scope>NUCLEOTIDE SEQUENCE [LARGE SCALE GENOMIC DNA]</scope>
    <source>
        <strain>PXO99A</strain>
    </source>
</reference>